<accession>P0A5K7</accession>
<accession>A0A1R3XWN2</accession>
<accession>O53876</accession>
<accession>X2BG23</accession>
<reference key="1">
    <citation type="journal article" date="2003" name="Proc. Natl. Acad. Sci. U.S.A.">
        <title>The complete genome sequence of Mycobacterium bovis.</title>
        <authorList>
            <person name="Garnier T."/>
            <person name="Eiglmeier K."/>
            <person name="Camus J.-C."/>
            <person name="Medina N."/>
            <person name="Mansoor H."/>
            <person name="Pryor M."/>
            <person name="Duthoy S."/>
            <person name="Grondin S."/>
            <person name="Lacroix C."/>
            <person name="Monsempe C."/>
            <person name="Simon S."/>
            <person name="Harris B."/>
            <person name="Atkin R."/>
            <person name="Doggett J."/>
            <person name="Mayes R."/>
            <person name="Keating L."/>
            <person name="Wheeler P.R."/>
            <person name="Parkhill J."/>
            <person name="Barrell B.G."/>
            <person name="Cole S.T."/>
            <person name="Gordon S.V."/>
            <person name="Hewinson R.G."/>
        </authorList>
    </citation>
    <scope>NUCLEOTIDE SEQUENCE [LARGE SCALE GENOMIC DNA]</scope>
    <source>
        <strain>ATCC BAA-935 / AF2122/97</strain>
    </source>
</reference>
<reference key="2">
    <citation type="journal article" date="2017" name="Genome Announc.">
        <title>Updated reference genome sequence and annotation of Mycobacterium bovis AF2122/97.</title>
        <authorList>
            <person name="Malone K.M."/>
            <person name="Farrell D."/>
            <person name="Stuber T.P."/>
            <person name="Schubert O.T."/>
            <person name="Aebersold R."/>
            <person name="Robbe-Austerman S."/>
            <person name="Gordon S.V."/>
        </authorList>
    </citation>
    <scope>NUCLEOTIDE SEQUENCE [LARGE SCALE GENOMIC DNA]</scope>
    <scope>GENOME REANNOTATION</scope>
    <source>
        <strain>ATCC BAA-935 / AF2122/97</strain>
    </source>
</reference>
<organism>
    <name type="scientific">Mycobacterium bovis (strain ATCC BAA-935 / AF2122/97)</name>
    <dbReference type="NCBI Taxonomy" id="233413"/>
    <lineage>
        <taxon>Bacteria</taxon>
        <taxon>Bacillati</taxon>
        <taxon>Actinomycetota</taxon>
        <taxon>Actinomycetes</taxon>
        <taxon>Mycobacteriales</taxon>
        <taxon>Mycobacteriaceae</taxon>
        <taxon>Mycobacterium</taxon>
        <taxon>Mycobacterium tuberculosis complex</taxon>
    </lineage>
</organism>
<feature type="chain" id="PRO_0000097813" description="Cyclic pyranopterin monophosphate synthase 2">
    <location>
        <begin position="1"/>
        <end position="167"/>
    </location>
</feature>
<feature type="region of interest" description="Disordered" evidence="2">
    <location>
        <begin position="1"/>
        <end position="23"/>
    </location>
</feature>
<feature type="compositionally biased region" description="Basic and acidic residues" evidence="2">
    <location>
        <begin position="11"/>
        <end position="23"/>
    </location>
</feature>
<feature type="active site" evidence="1">
    <location>
        <position position="137"/>
    </location>
</feature>
<feature type="binding site" evidence="1">
    <location>
        <begin position="86"/>
        <end position="88"/>
    </location>
    <ligand>
        <name>substrate</name>
    </ligand>
</feature>
<feature type="binding site" evidence="1">
    <location>
        <begin position="122"/>
        <end position="123"/>
    </location>
    <ligand>
        <name>substrate</name>
    </ligand>
</feature>
<evidence type="ECO:0000255" key="1">
    <source>
        <dbReference type="HAMAP-Rule" id="MF_01224"/>
    </source>
</evidence>
<evidence type="ECO:0000256" key="2">
    <source>
        <dbReference type="SAM" id="MobiDB-lite"/>
    </source>
</evidence>
<evidence type="ECO:0000305" key="3"/>
<protein>
    <recommendedName>
        <fullName evidence="1">Cyclic pyranopterin monophosphate synthase 2</fullName>
        <ecNumber evidence="1">4.6.1.17</ecNumber>
    </recommendedName>
    <alternativeName>
        <fullName evidence="1">Molybdenum cofactor biosynthesis protein C 2</fullName>
    </alternativeName>
</protein>
<name>MOAC2_MYCBO</name>
<keyword id="KW-0456">Lyase</keyword>
<keyword id="KW-0501">Molybdenum cofactor biosynthesis</keyword>
<keyword id="KW-1185">Reference proteome</keyword>
<comment type="function">
    <text evidence="1">Catalyzes the conversion of (8S)-3',8-cyclo-7,8-dihydroguanosine 5'-triphosphate to cyclic pyranopterin monophosphate (cPMP).</text>
</comment>
<comment type="catalytic activity">
    <reaction evidence="1">
        <text>(8S)-3',8-cyclo-7,8-dihydroguanosine 5'-triphosphate = cyclic pyranopterin phosphate + diphosphate</text>
        <dbReference type="Rhea" id="RHEA:49580"/>
        <dbReference type="ChEBI" id="CHEBI:33019"/>
        <dbReference type="ChEBI" id="CHEBI:59648"/>
        <dbReference type="ChEBI" id="CHEBI:131766"/>
        <dbReference type="EC" id="4.6.1.17"/>
    </reaction>
</comment>
<comment type="pathway">
    <text evidence="1">Cofactor biosynthesis; molybdopterin biosynthesis.</text>
</comment>
<comment type="subunit">
    <text evidence="1">Homohexamer; trimer of dimers.</text>
</comment>
<comment type="similarity">
    <text evidence="1">Belongs to the MoaC family.</text>
</comment>
<comment type="sequence caution" evidence="3">
    <conflict type="frameshift">
        <sequence resource="EMBL-CDS" id="SIT99486"/>
    </conflict>
</comment>
<sequence>MARASGASDYRSGELSHQDERGAAHMVDITEKATTKRTAVAAGILRTSAQVVALISTGGLPKGDALATARVAGIMAAKRTSDLIPLCHQLALTGVDVDFTVGQLDIEITATVRSTDRTGVEMEALTAVSVAALTLYDMIKAVDPGALIDDIRVLHKEGGRRGTWTRR</sequence>
<gene>
    <name type="primary">moaC2</name>
    <name type="ordered locus">BQ2027_MB0888</name>
</gene>
<dbReference type="EC" id="4.6.1.17" evidence="1"/>
<dbReference type="EMBL" id="LT708304">
    <property type="protein sequence ID" value="SIT99486.1"/>
    <property type="status" value="ALT_FRAME"/>
    <property type="molecule type" value="Genomic_DNA"/>
</dbReference>
<dbReference type="RefSeq" id="NP_854545.1">
    <property type="nucleotide sequence ID" value="NC_002945.3"/>
</dbReference>
<dbReference type="SMR" id="P0A5K7"/>
<dbReference type="KEGG" id="mbo:BQ2027_MB0888"/>
<dbReference type="PATRIC" id="fig|233413.5.peg.966"/>
<dbReference type="UniPathway" id="UPA00344"/>
<dbReference type="Proteomes" id="UP000001419">
    <property type="component" value="Chromosome"/>
</dbReference>
<dbReference type="GO" id="GO:0061799">
    <property type="term" value="F:cyclic pyranopterin monophosphate synthase activity"/>
    <property type="evidence" value="ECO:0007669"/>
    <property type="project" value="UniProtKB-UniRule"/>
</dbReference>
<dbReference type="GO" id="GO:0006777">
    <property type="term" value="P:Mo-molybdopterin cofactor biosynthetic process"/>
    <property type="evidence" value="ECO:0007669"/>
    <property type="project" value="UniProtKB-UniRule"/>
</dbReference>
<dbReference type="CDD" id="cd01420">
    <property type="entry name" value="MoaC_PE"/>
    <property type="match status" value="1"/>
</dbReference>
<dbReference type="Gene3D" id="3.30.70.640">
    <property type="entry name" value="Molybdopterin cofactor biosynthesis C (MoaC) domain"/>
    <property type="match status" value="1"/>
</dbReference>
<dbReference type="HAMAP" id="MF_01224_B">
    <property type="entry name" value="MoaC_B"/>
    <property type="match status" value="1"/>
</dbReference>
<dbReference type="InterPro" id="IPR023045">
    <property type="entry name" value="MoaC"/>
</dbReference>
<dbReference type="InterPro" id="IPR047594">
    <property type="entry name" value="MoaC_bact/euk"/>
</dbReference>
<dbReference type="InterPro" id="IPR036522">
    <property type="entry name" value="MoaC_sf"/>
</dbReference>
<dbReference type="InterPro" id="IPR050105">
    <property type="entry name" value="MoCo_biosynth_MoaA/MoaC"/>
</dbReference>
<dbReference type="InterPro" id="IPR002820">
    <property type="entry name" value="Mopterin_CF_biosynth-C_dom"/>
</dbReference>
<dbReference type="NCBIfam" id="TIGR00581">
    <property type="entry name" value="moaC"/>
    <property type="match status" value="1"/>
</dbReference>
<dbReference type="NCBIfam" id="NF006870">
    <property type="entry name" value="PRK09364.1"/>
    <property type="match status" value="1"/>
</dbReference>
<dbReference type="PANTHER" id="PTHR22960:SF29">
    <property type="entry name" value="CYCLIC PYRANOPTERIN MONOPHOSPHATE SYNTHASE"/>
    <property type="match status" value="1"/>
</dbReference>
<dbReference type="PANTHER" id="PTHR22960">
    <property type="entry name" value="MOLYBDOPTERIN COFACTOR SYNTHESIS PROTEIN A"/>
    <property type="match status" value="1"/>
</dbReference>
<dbReference type="Pfam" id="PF01967">
    <property type="entry name" value="MoaC"/>
    <property type="match status" value="1"/>
</dbReference>
<dbReference type="SUPFAM" id="SSF55040">
    <property type="entry name" value="Molybdenum cofactor biosynthesis protein C, MoaC"/>
    <property type="match status" value="1"/>
</dbReference>
<proteinExistence type="inferred from homology"/>